<comment type="catalytic activity">
    <reaction evidence="1">
        <text>oxaloacetate + acetyl-CoA + H2O = citrate + CoA + H(+)</text>
        <dbReference type="Rhea" id="RHEA:16845"/>
        <dbReference type="ChEBI" id="CHEBI:15377"/>
        <dbReference type="ChEBI" id="CHEBI:15378"/>
        <dbReference type="ChEBI" id="CHEBI:16452"/>
        <dbReference type="ChEBI" id="CHEBI:16947"/>
        <dbReference type="ChEBI" id="CHEBI:57287"/>
        <dbReference type="ChEBI" id="CHEBI:57288"/>
        <dbReference type="EC" id="2.3.3.16"/>
    </reaction>
</comment>
<comment type="pathway">
    <text>Carbohydrate metabolism; glyoxylate cycle; isocitrate from oxaloacetate: step 1/2.</text>
</comment>
<comment type="subcellular location">
    <subcellularLocation>
        <location>Glyoxysome</location>
    </subcellularLocation>
</comment>
<comment type="miscellaneous">
    <text>Citrate synthase is found in nearly all cells capable of oxidative metabolism.</text>
</comment>
<comment type="similarity">
    <text evidence="3">Belongs to the citrate synthase family.</text>
</comment>
<organism>
    <name type="scientific">Cucurbita maxima</name>
    <name type="common">Pumpkin</name>
    <name type="synonym">Winter squash</name>
    <dbReference type="NCBI Taxonomy" id="3661"/>
    <lineage>
        <taxon>Eukaryota</taxon>
        <taxon>Viridiplantae</taxon>
        <taxon>Streptophyta</taxon>
        <taxon>Embryophyta</taxon>
        <taxon>Tracheophyta</taxon>
        <taxon>Spermatophyta</taxon>
        <taxon>Magnoliopsida</taxon>
        <taxon>eudicotyledons</taxon>
        <taxon>Gunneridae</taxon>
        <taxon>Pentapetalae</taxon>
        <taxon>rosids</taxon>
        <taxon>fabids</taxon>
        <taxon>Cucurbitales</taxon>
        <taxon>Cucurbitaceae</taxon>
        <taxon>Cucurbiteae</taxon>
        <taxon>Cucurbita</taxon>
    </lineage>
</organism>
<protein>
    <recommendedName>
        <fullName>Citrate synthase, glyoxysomal</fullName>
        <ecNumber>2.3.3.16</ecNumber>
    </recommendedName>
    <alternativeName>
        <fullName>GCS</fullName>
    </alternativeName>
</protein>
<name>CYSZ_CUCMA</name>
<reference key="1">
    <citation type="journal article" date="1995" name="Plant Mol. Biol.">
        <title>Molecular characterization of a glyoxysomal citrate synthase that is synthesized as a precursor of higher molecular mass in pumpkin.</title>
        <authorList>
            <person name="Kato A."/>
            <person name="Hayashi M."/>
            <person name="Mori H."/>
            <person name="Nishimura M."/>
        </authorList>
    </citation>
    <scope>NUCLEOTIDE SEQUENCE [MRNA]</scope>
    <scope>PROTEIN SEQUENCE OF 44-51</scope>
    <source>
        <strain>cv. Kurokawa Amakuri Nankin</strain>
        <tissue>Etiolated cotyledon</tissue>
    </source>
</reference>
<accession>P49299</accession>
<proteinExistence type="evidence at protein level"/>
<feature type="transit peptide" description="Glyoxysome" evidence="2">
    <location>
        <begin position="1"/>
        <end position="43"/>
    </location>
</feature>
<feature type="chain" id="PRO_0000005490" description="Citrate synthase, glyoxysomal">
    <location>
        <begin position="44"/>
        <end position="516"/>
    </location>
</feature>
<feature type="active site" evidence="1">
    <location>
        <position position="329"/>
    </location>
</feature>
<feature type="active site" evidence="1">
    <location>
        <position position="368"/>
    </location>
</feature>
<feature type="active site" evidence="1">
    <location>
        <position position="424"/>
    </location>
</feature>
<evidence type="ECO:0000255" key="1">
    <source>
        <dbReference type="PROSITE-ProRule" id="PRU10117"/>
    </source>
</evidence>
<evidence type="ECO:0000269" key="2">
    <source>
    </source>
</evidence>
<evidence type="ECO:0000305" key="3"/>
<keyword id="KW-0903">Direct protein sequencing</keyword>
<keyword id="KW-0329">Glyoxylate bypass</keyword>
<keyword id="KW-0330">Glyoxysome</keyword>
<keyword id="KW-0576">Peroxisome</keyword>
<keyword id="KW-1185">Reference proteome</keyword>
<keyword id="KW-0808">Transferase</keyword>
<keyword id="KW-0809">Transit peptide</keyword>
<keyword id="KW-0816">Tricarboxylic acid cycle</keyword>
<sequence length="516" mass="56759">MPTDMELSPSNVARHRLAVLAAHLSAASLEPPVMASSLEAHCVSAQTMVAPPELVKGTLTIVDERTGKRYQVQVSEEGTIKATDLKKITTGPNDKGLKLYDPGYLNTAPVRSSISYIDGDLGILRYRGYPIEELAESSTYVEVAYLLMYGNLPSQSQLADWEFAISQHSAVPQGLVDIIQAMPHDAHPMGVLVSAMSALSVFHPDANPALRGQDLYKSKQVRDKQIARIIGKAPTIAAAAYLRLAGRPPVLPSSNLSYSENFLYMLDSLGNRSYKPNPRLARVLDILFILHAEHEMNCSTSAARHLASSGVDVFTALSGAVGALYGPLHGGANEAVLKMLSEIGTVNNIPEFIEGVKNRKRKMSGFGHRVYKNYDPRAKVIRKLAEEVFSIVGRDPLIEVAVALEKAALSDEYFVKRKLYPNVDFYSGLIYRAMGFPPEFFTVLFAIPRMAGYLAHWRESLDDPDTKIIRPQQVYTGEWLRHYIPPNERLVPAKADRLGQVSVSNASKRRLSGSGI</sequence>
<dbReference type="EC" id="2.3.3.16"/>
<dbReference type="EMBL" id="D38132">
    <property type="protein sequence ID" value="BAA07328.1"/>
    <property type="molecule type" value="mRNA"/>
</dbReference>
<dbReference type="PIR" id="S53008">
    <property type="entry name" value="S53008"/>
</dbReference>
<dbReference type="RefSeq" id="XP_022985955.1">
    <property type="nucleotide sequence ID" value="XM_023130187.1"/>
</dbReference>
<dbReference type="SMR" id="P49299"/>
<dbReference type="GeneID" id="111483841"/>
<dbReference type="OrthoDB" id="435022at2759"/>
<dbReference type="UniPathway" id="UPA00703">
    <property type="reaction ID" value="UER00717"/>
</dbReference>
<dbReference type="Proteomes" id="UP000504608">
    <property type="component" value="Unplaced"/>
</dbReference>
<dbReference type="GO" id="GO:0009514">
    <property type="term" value="C:glyoxysome"/>
    <property type="evidence" value="ECO:0007669"/>
    <property type="project" value="UniProtKB-SubCell"/>
</dbReference>
<dbReference type="GO" id="GO:0005759">
    <property type="term" value="C:mitochondrial matrix"/>
    <property type="evidence" value="ECO:0007669"/>
    <property type="project" value="TreeGrafter"/>
</dbReference>
<dbReference type="GO" id="GO:0004108">
    <property type="term" value="F:citrate (Si)-synthase activity"/>
    <property type="evidence" value="ECO:0007669"/>
    <property type="project" value="TreeGrafter"/>
</dbReference>
<dbReference type="GO" id="GO:0006097">
    <property type="term" value="P:glyoxylate cycle"/>
    <property type="evidence" value="ECO:0007669"/>
    <property type="project" value="UniProtKB-UniPathway"/>
</dbReference>
<dbReference type="GO" id="GO:0006099">
    <property type="term" value="P:tricarboxylic acid cycle"/>
    <property type="evidence" value="ECO:0007669"/>
    <property type="project" value="UniProtKB-KW"/>
</dbReference>
<dbReference type="CDD" id="cd06115">
    <property type="entry name" value="AthCS_per_like"/>
    <property type="match status" value="1"/>
</dbReference>
<dbReference type="FunFam" id="1.10.230.10:FF:000002">
    <property type="entry name" value="Citrate synthase"/>
    <property type="match status" value="1"/>
</dbReference>
<dbReference type="FunFam" id="1.10.580.10:FF:000005">
    <property type="entry name" value="Citrate synthase"/>
    <property type="match status" value="1"/>
</dbReference>
<dbReference type="Gene3D" id="1.10.580.10">
    <property type="entry name" value="Citrate Synthase, domain 1"/>
    <property type="match status" value="1"/>
</dbReference>
<dbReference type="Gene3D" id="1.10.230.10">
    <property type="entry name" value="Cytochrome P450-Terp, domain 2"/>
    <property type="match status" value="1"/>
</dbReference>
<dbReference type="InterPro" id="IPR016142">
    <property type="entry name" value="Citrate_synth-like_lrg_a-sub"/>
</dbReference>
<dbReference type="InterPro" id="IPR016143">
    <property type="entry name" value="Citrate_synth-like_sm_a-sub"/>
</dbReference>
<dbReference type="InterPro" id="IPR002020">
    <property type="entry name" value="Citrate_synthase"/>
</dbReference>
<dbReference type="InterPro" id="IPR019810">
    <property type="entry name" value="Citrate_synthase_AS"/>
</dbReference>
<dbReference type="InterPro" id="IPR036969">
    <property type="entry name" value="Citrate_synthase_sf"/>
</dbReference>
<dbReference type="PANTHER" id="PTHR11739">
    <property type="entry name" value="CITRATE SYNTHASE"/>
    <property type="match status" value="1"/>
</dbReference>
<dbReference type="PANTHER" id="PTHR11739:SF4">
    <property type="entry name" value="CITRATE SYNTHASE, PEROXISOMAL"/>
    <property type="match status" value="1"/>
</dbReference>
<dbReference type="Pfam" id="PF00285">
    <property type="entry name" value="Citrate_synt"/>
    <property type="match status" value="1"/>
</dbReference>
<dbReference type="PRINTS" id="PR00143">
    <property type="entry name" value="CITRTSNTHASE"/>
</dbReference>
<dbReference type="SUPFAM" id="SSF48256">
    <property type="entry name" value="Citrate synthase"/>
    <property type="match status" value="1"/>
</dbReference>
<dbReference type="PROSITE" id="PS00480">
    <property type="entry name" value="CITRATE_SYNTHASE"/>
    <property type="match status" value="1"/>
</dbReference>